<protein>
    <recommendedName>
        <fullName evidence="5">Anti-Pycsar protein Apyc1</fullName>
        <shortName evidence="5">Apyc1</shortName>
    </recommendedName>
</protein>
<comment type="function">
    <text evidence="4">Counteracts the host Pycsar antiviral defense system. Phosphodiesterase that enables metal-dependent hydrolysis of host cyclic nucleotide Pycsar defense signals such as cCMP and cUMP.</text>
</comment>
<comment type="catalytic activity">
    <reaction evidence="4">
        <text>3',5'-cyclic CMP + H2O = CMP + H(+)</text>
        <dbReference type="Rhea" id="RHEA:72675"/>
        <dbReference type="ChEBI" id="CHEBI:15377"/>
        <dbReference type="ChEBI" id="CHEBI:15378"/>
        <dbReference type="ChEBI" id="CHEBI:58003"/>
        <dbReference type="ChEBI" id="CHEBI:60377"/>
    </reaction>
    <physiologicalReaction direction="left-to-right" evidence="4">
        <dbReference type="Rhea" id="RHEA:72676"/>
    </physiologicalReaction>
</comment>
<comment type="catalytic activity">
    <reaction evidence="4">
        <text>3',5'-cyclic UMP + H2O = UMP + H(+)</text>
        <dbReference type="Rhea" id="RHEA:70575"/>
        <dbReference type="ChEBI" id="CHEBI:15377"/>
        <dbReference type="ChEBI" id="CHEBI:15378"/>
        <dbReference type="ChEBI" id="CHEBI:57865"/>
        <dbReference type="ChEBI" id="CHEBI:184387"/>
    </reaction>
    <physiologicalReaction direction="left-to-right" evidence="4">
        <dbReference type="Rhea" id="RHEA:70576"/>
    </physiologicalReaction>
</comment>
<comment type="cofactor">
    <cofactor evidence="2">
        <name>Zn(2+)</name>
        <dbReference type="ChEBI" id="CHEBI:29105"/>
    </cofactor>
    <text evidence="2">Coordinates 2 Zn(2+) ions. One protomer coordinates the metal ions and the opposing protomer provides the catalytic residues required for cCMP hydrolysis.</text>
</comment>
<comment type="subunit">
    <text evidence="3">Homodimer.</text>
</comment>
<comment type="similarity">
    <text evidence="6">Belongs to the anti-Pycsar protein Apyc1 family.</text>
</comment>
<organism>
    <name type="scientific">Bacillus phage 010DV004</name>
    <dbReference type="NCBI Taxonomy" id="2869562"/>
    <lineage>
        <taxon>Viruses</taxon>
        <taxon>Duplodnaviria</taxon>
        <taxon>Heunggongvirae</taxon>
        <taxon>Uroviricota</taxon>
        <taxon>Caudoviricetes</taxon>
        <taxon>Herelleviridae</taxon>
        <taxon>Bastillevirinae</taxon>
        <taxon>Nitunavirus</taxon>
    </lineage>
</organism>
<name>ACPY1_BP010</name>
<sequence>MRHTMELTMVGTGSAFSKKFYNNSALVEFSNGYRLLIDCGHSVPKGLHALGFPLDSLDGILITHTHADHIGGLEEVALYNKFVLGGRKIDLLVPNTLVESLWENSLKGGLRYPDEGSPEPELSDYFTVRSLKTSSYGVAHTQIEENMAVRLYPTVHVSHMDSYAVGLVDRGEDKVFYSSDTIFDEYLIDYALTYSWVFHDCQFFTGGVHASLDELLSYISEEDQSRVFLMHYGDNMEDFFTKAGMMRFALQGRTYIL</sequence>
<accession>A0A8G1LR08</accession>
<gene>
    <name evidence="7" type="primary">152</name>
    <name evidence="7" type="ORF">010DV004_152</name>
</gene>
<feature type="chain" id="PRO_0000456668" description="Anti-Pycsar protein Apyc1">
    <location>
        <begin position="1"/>
        <end position="257"/>
    </location>
</feature>
<feature type="region of interest" description="Beta-lactamase-like" evidence="2">
    <location>
        <begin position="21"/>
        <end position="231"/>
    </location>
</feature>
<feature type="binding site" evidence="2">
    <location>
        <position position="64"/>
    </location>
    <ligand>
        <name>Zn(2+)</name>
        <dbReference type="ChEBI" id="CHEBI:29105"/>
        <label>2</label>
    </ligand>
</feature>
<feature type="binding site" evidence="1">
    <location>
        <position position="66"/>
    </location>
    <ligand>
        <name>Zn(2+)</name>
        <dbReference type="ChEBI" id="CHEBI:29105"/>
        <label>2</label>
    </ligand>
</feature>
<feature type="binding site" evidence="3">
    <location>
        <position position="68"/>
    </location>
    <ligand>
        <name>Zn(2+)</name>
        <dbReference type="ChEBI" id="CHEBI:29105"/>
        <label>1</label>
    </ligand>
</feature>
<feature type="binding site" evidence="3">
    <location>
        <position position="69"/>
    </location>
    <ligand>
        <name>Zn(2+)</name>
        <dbReference type="ChEBI" id="CHEBI:29105"/>
        <label>1</label>
    </ligand>
</feature>
<feature type="binding site" evidence="2">
    <location>
        <position position="156"/>
    </location>
    <ligand>
        <name>Zn(2+)</name>
        <dbReference type="ChEBI" id="CHEBI:29105"/>
        <label>2</label>
    </ligand>
</feature>
<feature type="binding site" evidence="3">
    <location>
        <position position="180"/>
    </location>
    <ligand>
        <name>Zn(2+)</name>
        <dbReference type="ChEBI" id="CHEBI:29105"/>
        <label>1</label>
    </ligand>
</feature>
<feature type="binding site" evidence="3">
    <location>
        <position position="231"/>
    </location>
    <ligand>
        <name>Zn(2+)</name>
        <dbReference type="ChEBI" id="CHEBI:29105"/>
        <label>1</label>
    </ligand>
</feature>
<organismHost>
    <name type="scientific">Bacillus subtilis</name>
    <dbReference type="NCBI Taxonomy" id="1423"/>
</organismHost>
<evidence type="ECO:0000250" key="1">
    <source>
        <dbReference type="UniProtKB" id="A0A2W1NDJ7"/>
    </source>
</evidence>
<evidence type="ECO:0000250" key="2">
    <source>
        <dbReference type="UniProtKB" id="A0A345MJY6"/>
    </source>
</evidence>
<evidence type="ECO:0000250" key="3">
    <source>
        <dbReference type="UniProtKB" id="P0DTL1"/>
    </source>
</evidence>
<evidence type="ECO:0000269" key="4">
    <source>
    </source>
</evidence>
<evidence type="ECO:0000303" key="5">
    <source>
    </source>
</evidence>
<evidence type="ECO:0000305" key="6"/>
<evidence type="ECO:0000312" key="7">
    <source>
        <dbReference type="EMBL" id="QZA69089.1"/>
    </source>
</evidence>
<keyword id="KW-0945">Host-virus interaction</keyword>
<keyword id="KW-0378">Hydrolase</keyword>
<keyword id="KW-1090">Inhibition of host innate immune response by virus</keyword>
<keyword id="KW-0479">Metal-binding</keyword>
<keyword id="KW-1185">Reference proteome</keyword>
<keyword id="KW-0899">Viral immunoevasion</keyword>
<keyword id="KW-0862">Zinc</keyword>
<proteinExistence type="evidence at protein level"/>
<reference key="1">
    <citation type="submission" date="2021-07" db="EMBL/GenBank/DDBJ databases">
        <authorList>
            <person name="Magness L.H."/>
            <person name="DeCurzio J.M."/>
            <person name="Guffey A."/>
            <person name="Simoes M."/>
            <person name="Krukonis G.P."/>
            <person name="Delesalle V.A."/>
        </authorList>
    </citation>
    <scope>NUCLEOTIDE SEQUENCE [GENOMIC DNA]</scope>
</reference>
<reference key="2">
    <citation type="journal article" date="2022" name="Nature">
        <title>Phage anti-CBASS and anti-Pycsar nucleases subvert bacterial immunity.</title>
        <authorList>
            <person name="Hobbs S.J."/>
            <person name="Wein T."/>
            <person name="Lu A."/>
            <person name="Morehouse B.R."/>
            <person name="Schnabel J."/>
            <person name="Leavitt A."/>
            <person name="Yirmiya E."/>
            <person name="Sorek R."/>
            <person name="Kranzusch P.J."/>
        </authorList>
    </citation>
    <scope>FUNCTION</scope>
    <scope>CATALYTIC ACTIVITY</scope>
</reference>
<dbReference type="EMBL" id="MZ501260">
    <property type="protein sequence ID" value="QZA69089.1"/>
    <property type="molecule type" value="Genomic_DNA"/>
</dbReference>
<dbReference type="SMR" id="A0A8G1LR08"/>
<dbReference type="Proteomes" id="UP000828321">
    <property type="component" value="Segment"/>
</dbReference>
<dbReference type="GO" id="GO:0042781">
    <property type="term" value="F:3'-tRNA processing endoribonuclease activity"/>
    <property type="evidence" value="ECO:0007669"/>
    <property type="project" value="TreeGrafter"/>
</dbReference>
<dbReference type="GO" id="GO:0046872">
    <property type="term" value="F:metal ion binding"/>
    <property type="evidence" value="ECO:0007669"/>
    <property type="project" value="UniProtKB-KW"/>
</dbReference>
<dbReference type="GO" id="GO:0052170">
    <property type="term" value="P:symbiont-mediated suppression of host innate immune response"/>
    <property type="evidence" value="ECO:0007669"/>
    <property type="project" value="UniProtKB-KW"/>
</dbReference>
<dbReference type="Gene3D" id="3.60.15.10">
    <property type="entry name" value="Ribonuclease Z/Hydroxyacylglutathione hydrolase-like"/>
    <property type="match status" value="1"/>
</dbReference>
<dbReference type="InterPro" id="IPR056308">
    <property type="entry name" value="Anti-Pycsar_Apyc1"/>
</dbReference>
<dbReference type="InterPro" id="IPR001279">
    <property type="entry name" value="Metallo-B-lactamas"/>
</dbReference>
<dbReference type="InterPro" id="IPR036866">
    <property type="entry name" value="RibonucZ/Hydroxyglut_hydro"/>
</dbReference>
<dbReference type="PANTHER" id="PTHR46018">
    <property type="entry name" value="ZINC PHOSPHODIESTERASE ELAC PROTEIN 1"/>
    <property type="match status" value="1"/>
</dbReference>
<dbReference type="PANTHER" id="PTHR46018:SF2">
    <property type="entry name" value="ZINC PHOSPHODIESTERASE ELAC PROTEIN 1"/>
    <property type="match status" value="1"/>
</dbReference>
<dbReference type="Pfam" id="PF23023">
    <property type="entry name" value="Anti-Pycsar_Apyc1"/>
    <property type="match status" value="1"/>
</dbReference>
<dbReference type="SMART" id="SM00849">
    <property type="entry name" value="Lactamase_B"/>
    <property type="match status" value="1"/>
</dbReference>
<dbReference type="SUPFAM" id="SSF56281">
    <property type="entry name" value="Metallo-hydrolase/oxidoreductase"/>
    <property type="match status" value="1"/>
</dbReference>